<sequence length="632" mass="66860">MAKLTKPKTEGILHKGQSLYEYLDARVLTSKPFGAAGDATTDDTEVIAASLNSQKAVTISDGVFSSSGINSNYCNLDGRGSGVLSHRSSTGNYLVFNNPRTGRLSNITVESNKATDTTQGQQVSLAGGSDVTVSDVNFSNVKGTGFSLIAYPNDAPPDGLMIKGIRGSYSGYATNKAAGCVLADSSVNSLIDNVIAKNYPQFGAVELKGTASYNIVSNVIGADCQHVTYNGTEGPIAPSNNLIKGVMANNPKYAAVVAGKGSTNLISDVLVDYSTSDARQAHGVTVEGSDNVINNVLMSGCDGTNSLGQRQTATIARFIGTANNNYASVFPSYSATGVITFESGSTRNFVEVKHPGRRNDLLSSASTIDGAATIDGTSNSNVVHAPALGQYIGSMSGRFEWRIKSMSLPSGVLTSADKYRMLGDGAVSLAVGGGTSSQVRLFTSDGTSRTVSLTNGNVRLSTSSTGYLQLGADAMTPDSTGTYALGSASRAWSGGFTQAAFTVTSDARCKTEPLTISDALLDAWSEVDFVQFQYLDRVEEKGADSARWHFGIIAQRAKEAFERHGIDAHRYGFLCFDSWDDVYEEDANGSRKLITPAGSRYGIRYEEVLILEAALMRRTIKRMQEALAALPK</sequence>
<comment type="function">
    <molecule>Mature tail spike protein</molecule>
    <text evidence="4 8">Functions as a receptor binding protein (RBP) and probably mediates the attachment to the host capsular exopolysaccharides (Probable). Displays a depolymerase activity that specifically degrades the K5-type polysaccharides of Escherichia coli capsule (PubMed:10850992).</text>
</comment>
<comment type="function">
    <molecule>Intramolecular chaperone</molecule>
    <text evidence="2">The C-terminal chaperone protein mediates homotrimerization and proper folding of the catalytic trimer.</text>
</comment>
<comment type="biophysicochemical properties">
    <molecule>Mature tail spike protein</molecule>
    <phDependence>
        <text evidence="4">Optimum pH is 8.5.</text>
    </phDependence>
    <temperatureDependence>
        <text evidence="5">Optimum temperature is 44 degrees Celsius.</text>
    </temperatureDependence>
</comment>
<comment type="subunit">
    <molecule>Mature tail spike protein</molecule>
    <text evidence="5">Homotrimer.</text>
</comment>
<comment type="subcellular location">
    <molecule>Mature tail spike protein</molecule>
    <subcellularLocation>
        <location evidence="7">Virion</location>
    </subcellularLocation>
</comment>
<comment type="PTM">
    <molecule>Tail spike protein</molecule>
    <text evidence="1 2">Proteolytic cleavage and release of the chaperone in the host cytosol stabilizes the folded protein (By similarity). The cleavage gives rise to the mature tail spike protein but is not essential for catalytic activity (By similarity).</text>
</comment>
<proteinExistence type="evidence at protein level"/>
<evidence type="ECO:0000250" key="1">
    <source>
        <dbReference type="UniProtKB" id="P49714"/>
    </source>
</evidence>
<evidence type="ECO:0000250" key="2">
    <source>
        <dbReference type="UniProtKB" id="Q04830"/>
    </source>
</evidence>
<evidence type="ECO:0000255" key="3">
    <source>
        <dbReference type="PROSITE-ProRule" id="PRU01025"/>
    </source>
</evidence>
<evidence type="ECO:0000269" key="4">
    <source>
    </source>
</evidence>
<evidence type="ECO:0000269" key="5">
    <source>
    </source>
</evidence>
<evidence type="ECO:0000303" key="6">
    <source>
    </source>
</evidence>
<evidence type="ECO:0000305" key="7"/>
<evidence type="ECO:0000305" key="8">
    <source>
    </source>
</evidence>
<evidence type="ECO:0000305" key="9">
    <source>
    </source>
</evidence>
<evidence type="ECO:0007744" key="10">
    <source>
        <dbReference type="PDB" id="2X3H"/>
    </source>
</evidence>
<evidence type="ECO:0007829" key="11">
    <source>
        <dbReference type="PDB" id="2X3H"/>
    </source>
</evidence>
<name>FIBER_BPK5</name>
<dbReference type="EC" id="4.-.-.-" evidence="8"/>
<dbReference type="EMBL" id="Y10025">
    <property type="protein sequence ID" value="CAA71133.2"/>
    <property type="molecule type" value="Genomic_DNA"/>
</dbReference>
<dbReference type="PDB" id="2X3H">
    <property type="method" value="X-ray"/>
    <property type="resolution" value="1.60 A"/>
    <property type="chains" value="A/B/C=1-505"/>
</dbReference>
<dbReference type="PDBsum" id="2X3H"/>
<dbReference type="SMR" id="O09496"/>
<dbReference type="EvolutionaryTrace" id="O09496"/>
<dbReference type="GO" id="GO:0098024">
    <property type="term" value="C:virus tail, fiber"/>
    <property type="evidence" value="ECO:0007669"/>
    <property type="project" value="UniProtKB-KW"/>
</dbReference>
<dbReference type="GO" id="GO:0016829">
    <property type="term" value="F:lyase activity"/>
    <property type="evidence" value="ECO:0007669"/>
    <property type="project" value="UniProtKB-KW"/>
</dbReference>
<dbReference type="GO" id="GO:0098994">
    <property type="term" value="P:symbiont entry into host cell via disruption of host cell envelope"/>
    <property type="evidence" value="ECO:0007669"/>
    <property type="project" value="UniProtKB-KW"/>
</dbReference>
<dbReference type="GO" id="GO:0098996">
    <property type="term" value="P:symbiont entry into host cell via disruption of host cell glycocalyx"/>
    <property type="evidence" value="ECO:0007669"/>
    <property type="project" value="UniProtKB-KW"/>
</dbReference>
<dbReference type="CDD" id="cd10144">
    <property type="entry name" value="Peptidase_S74_CIMCD"/>
    <property type="match status" value="1"/>
</dbReference>
<dbReference type="Gene3D" id="2.160.20.10">
    <property type="entry name" value="Single-stranded right-handed beta-helix, Pectin lyase-like"/>
    <property type="match status" value="1"/>
</dbReference>
<dbReference type="Gene3D" id="1.10.10.10">
    <property type="entry name" value="Winged helix-like DNA-binding domain superfamily/Winged helix DNA-binding domain"/>
    <property type="match status" value="1"/>
</dbReference>
<dbReference type="InterPro" id="IPR012334">
    <property type="entry name" value="Pectin_lyas_fold"/>
</dbReference>
<dbReference type="InterPro" id="IPR011050">
    <property type="entry name" value="Pectin_lyase_fold/virulence"/>
</dbReference>
<dbReference type="InterPro" id="IPR030392">
    <property type="entry name" value="S74_ICA"/>
</dbReference>
<dbReference type="InterPro" id="IPR036388">
    <property type="entry name" value="WH-like_DNA-bd_sf"/>
</dbReference>
<dbReference type="Pfam" id="PF13884">
    <property type="entry name" value="Peptidase_S74"/>
    <property type="match status" value="1"/>
</dbReference>
<dbReference type="SUPFAM" id="SSF51126">
    <property type="entry name" value="Pectin lyase-like"/>
    <property type="match status" value="1"/>
</dbReference>
<dbReference type="PROSITE" id="PS51688">
    <property type="entry name" value="ICA"/>
    <property type="match status" value="1"/>
</dbReference>
<feature type="chain" id="PRO_0000458734" description="Tail spike protein">
    <location>
        <begin position="1"/>
        <end position="632"/>
    </location>
</feature>
<feature type="chain" id="PRO_0000458735" description="Mature tail spike protein">
    <location>
        <begin position="1"/>
        <end position="505"/>
    </location>
</feature>
<feature type="chain" id="PRO_0000458736" description="Intramolecular chaperone">
    <location>
        <begin position="506"/>
        <end position="632"/>
    </location>
</feature>
<feature type="domain" description="Peptidase S74" evidence="3">
    <location>
        <begin position="505"/>
        <end position="630"/>
    </location>
</feature>
<feature type="site" description="Cleavage; by autolysis" evidence="9">
    <location>
        <begin position="505"/>
        <end position="506"/>
    </location>
</feature>
<feature type="mutagenesis site" description="Complete loss of enzymatic activity." evidence="5">
    <original>E</original>
    <variation>A</variation>
    <location>
        <position position="206"/>
    </location>
</feature>
<feature type="mutagenesis site" description="Complete loss of enzymatic activity." evidence="5">
    <original>K</original>
    <variation>A</variation>
    <variation>M</variation>
    <variation>R</variation>
    <location>
        <position position="208"/>
    </location>
</feature>
<feature type="mutagenesis site" description="No effect on enzymatic activity." evidence="5">
    <original>H</original>
    <variation>A</variation>
    <location>
        <position position="226"/>
    </location>
</feature>
<feature type="mutagenesis site" description="98% loss ofof enzymatic activity." evidence="5">
    <original>Y</original>
    <variation>A</variation>
    <location>
        <position position="229"/>
    </location>
</feature>
<feature type="mutagenesis site" description="75% loss of enzymatic activity." evidence="5">
    <original>Y</original>
    <variation>F</variation>
    <location>
        <position position="229"/>
    </location>
</feature>
<feature type="mutagenesis site" description="No effect on enzymatic activity." evidence="5">
    <original>Y</original>
    <variation>A</variation>
    <location>
        <position position="253"/>
    </location>
</feature>
<feature type="mutagenesis site" description="No effect on enzymatic activity." evidence="5">
    <original>H</original>
    <variation>A</variation>
    <location>
        <position position="282"/>
    </location>
</feature>
<feature type="helix" evidence="11">
    <location>
        <begin position="9"/>
        <end position="11"/>
    </location>
</feature>
<feature type="helix" evidence="11">
    <location>
        <begin position="19"/>
        <end position="26"/>
    </location>
</feature>
<feature type="strand" evidence="11">
    <location>
        <begin position="29"/>
        <end position="31"/>
    </location>
</feature>
<feature type="strand" evidence="11">
    <location>
        <begin position="38"/>
        <end position="41"/>
    </location>
</feature>
<feature type="helix" evidence="11">
    <location>
        <begin position="44"/>
        <end position="51"/>
    </location>
</feature>
<feature type="strand" evidence="11">
    <location>
        <begin position="53"/>
        <end position="55"/>
    </location>
</feature>
<feature type="strand" evidence="11">
    <location>
        <begin position="61"/>
        <end position="66"/>
    </location>
</feature>
<feature type="strand" evidence="11">
    <location>
        <begin position="69"/>
        <end position="72"/>
    </location>
</feature>
<feature type="strand" evidence="11">
    <location>
        <begin position="75"/>
        <end position="77"/>
    </location>
</feature>
<feature type="turn" evidence="11">
    <location>
        <begin position="79"/>
        <end position="81"/>
    </location>
</feature>
<feature type="strand" evidence="11">
    <location>
        <begin position="82"/>
        <end position="86"/>
    </location>
</feature>
<feature type="strand" evidence="11">
    <location>
        <begin position="88"/>
        <end position="91"/>
    </location>
</feature>
<feature type="strand" evidence="11">
    <location>
        <begin position="94"/>
        <end position="98"/>
    </location>
</feature>
<feature type="strand" evidence="11">
    <location>
        <begin position="100"/>
        <end position="110"/>
    </location>
</feature>
<feature type="strand" evidence="11">
    <location>
        <begin position="122"/>
        <end position="127"/>
    </location>
</feature>
<feature type="strand" evidence="11">
    <location>
        <begin position="129"/>
        <end position="141"/>
    </location>
</feature>
<feature type="strand" evidence="11">
    <location>
        <begin position="143"/>
        <end position="151"/>
    </location>
</feature>
<feature type="strand" evidence="11">
    <location>
        <begin position="153"/>
        <end position="155"/>
    </location>
</feature>
<feature type="strand" evidence="11">
    <location>
        <begin position="161"/>
        <end position="169"/>
    </location>
</feature>
<feature type="strand" evidence="11">
    <location>
        <begin position="177"/>
        <end position="185"/>
    </location>
</feature>
<feature type="strand" evidence="11">
    <location>
        <begin position="190"/>
        <end position="198"/>
    </location>
</feature>
<feature type="strand" evidence="11">
    <location>
        <begin position="203"/>
        <end position="208"/>
    </location>
</feature>
<feature type="strand" evidence="11">
    <location>
        <begin position="215"/>
        <end position="223"/>
    </location>
</feature>
<feature type="strand" evidence="11">
    <location>
        <begin position="225"/>
        <end position="231"/>
    </location>
</feature>
<feature type="strand" evidence="11">
    <location>
        <begin position="233"/>
        <end position="235"/>
    </location>
</feature>
<feature type="strand" evidence="11">
    <location>
        <begin position="242"/>
        <end position="250"/>
    </location>
</feature>
<feature type="strand" evidence="11">
    <location>
        <begin position="252"/>
        <end position="257"/>
    </location>
</feature>
<feature type="strand" evidence="11">
    <location>
        <begin position="265"/>
        <end position="272"/>
    </location>
</feature>
<feature type="strand" evidence="11">
    <location>
        <begin position="279"/>
        <end position="286"/>
    </location>
</feature>
<feature type="strand" evidence="11">
    <location>
        <begin position="288"/>
        <end position="290"/>
    </location>
</feature>
<feature type="strand" evidence="11">
    <location>
        <begin position="292"/>
        <end position="299"/>
    </location>
</feature>
<feature type="strand" evidence="11">
    <location>
        <begin position="302"/>
        <end position="304"/>
    </location>
</feature>
<feature type="strand" evidence="11">
    <location>
        <begin position="312"/>
        <end position="318"/>
    </location>
</feature>
<feature type="strand" evidence="11">
    <location>
        <begin position="326"/>
        <end position="333"/>
    </location>
</feature>
<feature type="strand" evidence="11">
    <location>
        <begin position="339"/>
        <end position="341"/>
    </location>
</feature>
<feature type="strand" evidence="11">
    <location>
        <begin position="349"/>
        <end position="353"/>
    </location>
</feature>
<feature type="strand" evidence="11">
    <location>
        <begin position="367"/>
        <end position="369"/>
    </location>
</feature>
<feature type="helix" evidence="11">
    <location>
        <begin position="371"/>
        <end position="373"/>
    </location>
</feature>
<feature type="strand" evidence="11">
    <location>
        <begin position="382"/>
        <end position="385"/>
    </location>
</feature>
<feature type="helix" evidence="11">
    <location>
        <begin position="386"/>
        <end position="388"/>
    </location>
</feature>
<feature type="strand" evidence="11">
    <location>
        <begin position="390"/>
        <end position="392"/>
    </location>
</feature>
<feature type="strand" evidence="11">
    <location>
        <begin position="397"/>
        <end position="404"/>
    </location>
</feature>
<feature type="strand" evidence="11">
    <location>
        <begin position="419"/>
        <end position="422"/>
    </location>
</feature>
<feature type="strand" evidence="11">
    <location>
        <begin position="424"/>
        <end position="443"/>
    </location>
</feature>
<feature type="strand" evidence="11">
    <location>
        <begin position="448"/>
        <end position="454"/>
    </location>
</feature>
<feature type="strand" evidence="11">
    <location>
        <begin position="457"/>
        <end position="465"/>
    </location>
</feature>
<feature type="strand" evidence="11">
    <location>
        <begin position="467"/>
        <end position="470"/>
    </location>
</feature>
<feature type="strand" evidence="11">
    <location>
        <begin position="472"/>
        <end position="479"/>
    </location>
</feature>
<feature type="strand" evidence="11">
    <location>
        <begin position="484"/>
        <end position="486"/>
    </location>
</feature>
<feature type="strand" evidence="11">
    <location>
        <begin position="488"/>
        <end position="490"/>
    </location>
</feature>
<feature type="strand" evidence="11">
    <location>
        <begin position="492"/>
        <end position="499"/>
    </location>
</feature>
<gene>
    <name type="primary">kflA</name>
</gene>
<organism>
    <name type="scientific">Escherichia virus K5</name>
    <name type="common">Bacteriophage K5</name>
    <dbReference type="NCBI Taxonomy" id="56637"/>
    <lineage>
        <taxon>Viruses</taxon>
        <taxon>Duplodnaviria</taxon>
        <taxon>Heunggongvirae</taxon>
        <taxon>Uroviricota</taxon>
        <taxon>Caudoviricetes</taxon>
        <taxon>Autographiviridae</taxon>
        <taxon>Molineuxvirinae</taxon>
        <taxon>Zindervirus</taxon>
    </lineage>
</organism>
<accession>O09496</accession>
<protein>
    <recommendedName>
        <fullName evidence="6">Tail spike protein</fullName>
    </recommendedName>
    <alternativeName>
        <fullName>Depolymerase, capsule K5-specific</fullName>
        <ecNumber evidence="8">4.-.-.-</ecNumber>
    </alternativeName>
    <component>
        <recommendedName>
            <fullName evidence="6">Mature tail spike protein</fullName>
        </recommendedName>
    </component>
    <component>
        <recommendedName>
            <fullName evidence="6">Intramolecular chaperone</fullName>
        </recommendedName>
    </component>
</protein>
<organismHost>
    <name type="scientific">Escherichia coli</name>
    <dbReference type="NCBI Taxonomy" id="562"/>
</organismHost>
<reference key="1">
    <citation type="journal article" date="2000" name="J. Bacteriol.">
        <title>Cloning, expression, and purification of the K5 capsular polysaccharide lyase (KflA) from coliphage K5A: evidence for two distinct K5 lyase enzymes.</title>
        <authorList>
            <person name="Clarke B.R."/>
            <person name="Esumeh F."/>
            <person name="Roberts I.S."/>
        </authorList>
    </citation>
    <scope>NUCLEOTIDE SEQUENCE [GENOMIC DNA]</scope>
    <scope>CATALYTIC ACTIVITY (MATURE TAIL SPIKE PROTEIN)</scope>
    <scope>FUNCTION (MATURE TAIL SPIKE PROTEIN)</scope>
    <scope>BIOPHYSICOCHEMICAL PROPERTIES (MATURE TAIL SPIKE PROTEIN)</scope>
</reference>
<reference evidence="10" key="2">
    <citation type="journal article" date="2010" name="J. Biol. Chem.">
        <title>The K5 lyase KflA combines a viral tail spike structure with a bacterial polysaccharide lyase mechanism.</title>
        <authorList>
            <person name="Thompson J.E."/>
            <person name="Pourhossein M."/>
            <person name="Waterhouse A."/>
            <person name="Hudson T."/>
            <person name="Goldrick M."/>
            <person name="Derrick J.P."/>
            <person name="Roberts I.S."/>
        </authorList>
    </citation>
    <scope>X-RAY CRYSTALLOGRAPHY (1.60 ANGSTROMS) OF 1-505</scope>
    <scope>SUBUNIT (MATURE TAIL SPIKE PROTEIN)</scope>
    <scope>BIOPHYSICOCHEMICAL PROPERTIES (MATURE TAIL SPIKE PROTEIN)</scope>
    <scope>MUTAGENESIS OF GLU-206; LYS-208; HIS-226; TYR-229; TYR-253 AND HIS-282</scope>
    <scope>PROTEOLYTIC CLEAVAGE (TAIL SPIKE PROTEIN)</scope>
</reference>
<keyword id="KW-0002">3D-structure</keyword>
<keyword id="KW-1238">Degradation of host capsule during virus entry</keyword>
<keyword id="KW-1235">Degradation of host cell envelope components during virus entry</keyword>
<keyword id="KW-0456">Lyase</keyword>
<keyword id="KW-1230">Viral tail fiber protein</keyword>
<keyword id="KW-1227">Viral tail protein</keyword>
<keyword id="KW-0946">Virion</keyword>
<keyword id="KW-1160">Virus entry into host cell</keyword>